<comment type="function">
    <text evidence="4 6 8 9 10 12 16">Inhibits NF-kappa-B activation by blocking the interaction of RIPK1 with its downstream effector NEMO/IKBKG. Forms a ternary complex with NFKB1 and MAP3K8 but appears to function upstream of MAP3K8 in the TLR4 signaling pathway that regulates MAP3K8 activation. Involved in activation of the MEK/ERK signaling pathway during innate immune response; this function seems to be stimulus- and cell type specific. Required for stability of MAP3K8. Involved in regulation of apoptosis in endothelial cells; promotes TEK agonist-stimulated endothelial survival. May act as transcriptional coactivator when translocated to the nucleus. Enhances CHUK-mediated NF-kappa-B activation involving NF-kappa-B p50-p65 and p50-c-Rel complexes.</text>
</comment>
<comment type="subunit">
    <text evidence="4 6 7 8 10 12 15 16">Interacts with STK11/LKB1, TNFAIP3, IKBKG, NFKB1, MAP3K8, TEK, RIPK1, CHUK, IKBKB and SMARCD1. Interacts with polyubiquitin.</text>
</comment>
<comment type="subunit">
    <text evidence="18">(Microbial infection) Interacts with severe fever with thrombocytopenia syndrome virus (SFTSV) NSs; this interaction promotes TPL2 complex formation and signaling activity leading to IL-10 production.</text>
</comment>
<comment type="interaction">
    <interactant intactId="EBI-359372">
        <id>Q8NFZ5</id>
    </interactant>
    <interactant intactId="EBI-81279">
        <id>Q9Y6K9</id>
        <label>IKBKG</label>
    </interactant>
    <organismsDiffer>false</organismsDiffer>
    <experiments>8</experiments>
</comment>
<comment type="interaction">
    <interactant intactId="EBI-359372">
        <id>Q8NFZ5</id>
    </interactant>
    <interactant intactId="EBI-354900">
        <id>P41279</id>
        <label>MAP3K8</label>
    </interactant>
    <organismsDiffer>false</organismsDiffer>
    <experiments>10</experiments>
</comment>
<comment type="interaction">
    <interactant intactId="EBI-359372">
        <id>Q8NFZ5</id>
    </interactant>
    <interactant intactId="EBI-300010">
        <id>P19838</id>
        <label>NFKB1</label>
    </interactant>
    <organismsDiffer>false</organismsDiffer>
    <experiments>7</experiments>
</comment>
<comment type="interaction">
    <interactant intactId="EBI-359372">
        <id>Q8NFZ5</id>
    </interactant>
    <interactant intactId="EBI-1452239">
        <id>P19838-1</id>
        <label>NFKB1</label>
    </interactant>
    <organismsDiffer>false</organismsDiffer>
    <experiments>8</experiments>
</comment>
<comment type="interaction">
    <interactant intactId="EBI-359372">
        <id>Q8NFZ5</id>
    </interactant>
    <interactant intactId="EBI-307352">
        <id>Q04864</id>
        <label>REL</label>
    </interactant>
    <organismsDiffer>false</organismsDiffer>
    <experiments>3</experiments>
</comment>
<comment type="interaction">
    <interactant intactId="EBI-359372">
        <id>Q8NFZ5</id>
    </interactant>
    <interactant intactId="EBI-306838">
        <id>Q15831</id>
        <label>STK11</label>
    </interactant>
    <organismsDiffer>false</organismsDiffer>
    <experiments>5</experiments>
</comment>
<comment type="interaction">
    <interactant intactId="EBI-359372">
        <id>Q8NFZ5</id>
    </interactant>
    <interactant intactId="EBI-527670">
        <id>P21580</id>
        <label>TNFAIP3</label>
    </interactant>
    <organismsDiffer>false</organismsDiffer>
    <experiments>4</experiments>
</comment>
<comment type="subcellular location">
    <subcellularLocation>
        <location evidence="6">Cytoplasm</location>
    </subcellularLocation>
    <subcellularLocation>
        <location evidence="20">Nucleus</location>
    </subcellularLocation>
</comment>
<comment type="alternative products">
    <event type="alternative splicing"/>
    <isoform>
        <id>Q8NFZ5-1</id>
        <name evidence="5 6 13">1</name>
        <sequence type="displayed"/>
    </isoform>
    <isoform>
        <id>Q8NFZ5-2</id>
        <name evidence="11">2</name>
        <sequence type="described" ref="VSP_052701"/>
    </isoform>
</comment>
<comment type="tissue specificity">
    <text evidence="6">Ubiquitously expressed in all tissues examined.</text>
</comment>
<comment type="PTM">
    <text evidence="16">In vitro phosphorylated by CHUK.</text>
</comment>
<comment type="PTM">
    <text evidence="16 17">Ubiquitinated; undergoes 'Lys-48'-linked polyubiquitination probably leading to constitutive proteasomal degradation which can be impaired by IKK-A/CHUK or IKBKB probably involving deubiquitination (PubMed:21784860). Deubiquitinated by USP35; leading to stabilization and inhibition of TNFalpha-induced NF-kappa-B activation (PubMed:26348204).</text>
</comment>
<dbReference type="EMBL" id="AJ304866">
    <property type="protein sequence ID" value="CAC34835.1"/>
    <property type="molecule type" value="mRNA"/>
</dbReference>
<dbReference type="EMBL" id="AF372839">
    <property type="protein sequence ID" value="AAM21315.1"/>
    <property type="molecule type" value="mRNA"/>
</dbReference>
<dbReference type="EMBL" id="AK026176">
    <property type="protein sequence ID" value="BAB15382.1"/>
    <property type="molecule type" value="mRNA"/>
</dbReference>
<dbReference type="EMBL" id="AK096296">
    <property type="protein sequence ID" value="BAG53250.1"/>
    <property type="molecule type" value="mRNA"/>
</dbReference>
<dbReference type="EMBL" id="CH471131">
    <property type="protein sequence ID" value="EAW82514.1"/>
    <property type="molecule type" value="Genomic_DNA"/>
</dbReference>
<dbReference type="EMBL" id="AL121750">
    <property type="protein sequence ID" value="CAM28233.1"/>
    <property type="molecule type" value="Genomic_DNA"/>
</dbReference>
<dbReference type="EMBL" id="AL110117">
    <property type="protein sequence ID" value="CAM28233.1"/>
    <property type="status" value="JOINED"/>
    <property type="molecule type" value="Genomic_DNA"/>
</dbReference>
<dbReference type="EMBL" id="CH471131">
    <property type="protein sequence ID" value="EAW82516.1"/>
    <property type="molecule type" value="Genomic_DNA"/>
</dbReference>
<dbReference type="EMBL" id="BC002740">
    <property type="protein sequence ID" value="AAH02740.2"/>
    <property type="molecule type" value="mRNA"/>
</dbReference>
<dbReference type="CCDS" id="CCDS3362.1">
    <molecule id="Q8NFZ5-1"/>
</dbReference>
<dbReference type="CCDS" id="CCDS54714.1">
    <molecule id="Q8NFZ5-2"/>
</dbReference>
<dbReference type="RefSeq" id="NP_001154999.1">
    <molecule id="Q8NFZ5-2"/>
    <property type="nucleotide sequence ID" value="NM_001161527.2"/>
</dbReference>
<dbReference type="RefSeq" id="NP_001278945.1">
    <property type="nucleotide sequence ID" value="NM_001292016.1"/>
</dbReference>
<dbReference type="RefSeq" id="NP_077285.3">
    <molecule id="Q8NFZ5-1"/>
    <property type="nucleotide sequence ID" value="NM_024309.3"/>
</dbReference>
<dbReference type="PDB" id="5H07">
    <property type="method" value="X-ray"/>
    <property type="resolution" value="2.59 A"/>
    <property type="chains" value="C/D=257-344"/>
</dbReference>
<dbReference type="PDBsum" id="5H07"/>
<dbReference type="SMR" id="Q8NFZ5"/>
<dbReference type="BioGRID" id="122573">
    <property type="interactions" value="955"/>
</dbReference>
<dbReference type="CORUM" id="Q8NFZ5"/>
<dbReference type="DIP" id="DIP-27617N"/>
<dbReference type="FunCoup" id="Q8NFZ5">
    <property type="interactions" value="1627"/>
</dbReference>
<dbReference type="IntAct" id="Q8NFZ5">
    <property type="interactions" value="97"/>
</dbReference>
<dbReference type="MINT" id="Q8NFZ5"/>
<dbReference type="STRING" id="9606.ENSP00000321203"/>
<dbReference type="GlyGen" id="Q8NFZ5">
    <property type="glycosylation" value="1 site, 1 O-linked glycan (1 site)"/>
</dbReference>
<dbReference type="iPTMnet" id="Q8NFZ5"/>
<dbReference type="PhosphoSitePlus" id="Q8NFZ5"/>
<dbReference type="BioMuta" id="TNIP2"/>
<dbReference type="DMDM" id="74715616"/>
<dbReference type="jPOST" id="Q8NFZ5"/>
<dbReference type="MassIVE" id="Q8NFZ5"/>
<dbReference type="PaxDb" id="9606-ENSP00000321203"/>
<dbReference type="PeptideAtlas" id="Q8NFZ5"/>
<dbReference type="ProteomicsDB" id="73398">
    <molecule id="Q8NFZ5-1"/>
</dbReference>
<dbReference type="ProteomicsDB" id="73399">
    <molecule id="Q8NFZ5-2"/>
</dbReference>
<dbReference type="Pumba" id="Q8NFZ5"/>
<dbReference type="Antibodypedia" id="22391">
    <property type="antibodies" value="223 antibodies from 27 providers"/>
</dbReference>
<dbReference type="DNASU" id="79155"/>
<dbReference type="Ensembl" id="ENST00000315423.12">
    <molecule id="Q8NFZ5-1"/>
    <property type="protein sequence ID" value="ENSP00000321203.7"/>
    <property type="gene ID" value="ENSG00000168884.15"/>
</dbReference>
<dbReference type="Ensembl" id="ENST00000510267.5">
    <molecule id="Q8NFZ5-2"/>
    <property type="protein sequence ID" value="ENSP00000427613.1"/>
    <property type="gene ID" value="ENSG00000168884.15"/>
</dbReference>
<dbReference type="GeneID" id="79155"/>
<dbReference type="KEGG" id="hsa:79155"/>
<dbReference type="MANE-Select" id="ENST00000315423.12">
    <property type="protein sequence ID" value="ENSP00000321203.7"/>
    <property type="RefSeq nucleotide sequence ID" value="NM_024309.4"/>
    <property type="RefSeq protein sequence ID" value="NP_077285.3"/>
</dbReference>
<dbReference type="UCSC" id="uc003gff.3">
    <molecule id="Q8NFZ5-1"/>
    <property type="organism name" value="human"/>
</dbReference>
<dbReference type="AGR" id="HGNC:19118"/>
<dbReference type="CTD" id="79155"/>
<dbReference type="DisGeNET" id="79155"/>
<dbReference type="GeneCards" id="TNIP2"/>
<dbReference type="HGNC" id="HGNC:19118">
    <property type="gene designation" value="TNIP2"/>
</dbReference>
<dbReference type="HPA" id="ENSG00000168884">
    <property type="expression patterns" value="Low tissue specificity"/>
</dbReference>
<dbReference type="MIM" id="610669">
    <property type="type" value="gene"/>
</dbReference>
<dbReference type="neXtProt" id="NX_Q8NFZ5"/>
<dbReference type="OpenTargets" id="ENSG00000168884"/>
<dbReference type="PharmGKB" id="PA134957006"/>
<dbReference type="VEuPathDB" id="HostDB:ENSG00000168884"/>
<dbReference type="eggNOG" id="ENOG502QUCD">
    <property type="taxonomic scope" value="Eukaryota"/>
</dbReference>
<dbReference type="GeneTree" id="ENSGT00510000046908"/>
<dbReference type="HOGENOM" id="CLU_039735_1_0_1"/>
<dbReference type="InParanoid" id="Q8NFZ5"/>
<dbReference type="OMA" id="INDCAEA"/>
<dbReference type="OrthoDB" id="6066489at2759"/>
<dbReference type="PAN-GO" id="Q8NFZ5">
    <property type="GO annotations" value="5 GO annotations based on evolutionary models"/>
</dbReference>
<dbReference type="PhylomeDB" id="Q8NFZ5"/>
<dbReference type="TreeFam" id="TF332167"/>
<dbReference type="PathwayCommons" id="Q8NFZ5"/>
<dbReference type="Reactome" id="R-HSA-5684264">
    <property type="pathway name" value="MAP3K8 (TPL2)-dependent MAPK1/3 activation"/>
</dbReference>
<dbReference type="Reactome" id="R-HSA-5689896">
    <property type="pathway name" value="Ovarian tumor domain proteases"/>
</dbReference>
<dbReference type="SignaLink" id="Q8NFZ5"/>
<dbReference type="SIGNOR" id="Q8NFZ5"/>
<dbReference type="BioGRID-ORCS" id="79155">
    <property type="hits" value="20 hits in 1167 CRISPR screens"/>
</dbReference>
<dbReference type="CD-CODE" id="E8F4C1F2">
    <property type="entry name" value="Sint speckle"/>
</dbReference>
<dbReference type="ChiTaRS" id="TNIP2">
    <property type="organism name" value="human"/>
</dbReference>
<dbReference type="GeneWiki" id="TNIP2"/>
<dbReference type="GenomeRNAi" id="79155"/>
<dbReference type="Pharos" id="Q8NFZ5">
    <property type="development level" value="Tbio"/>
</dbReference>
<dbReference type="PRO" id="PR:Q8NFZ5"/>
<dbReference type="Proteomes" id="UP000005640">
    <property type="component" value="Chromosome 4"/>
</dbReference>
<dbReference type="RNAct" id="Q8NFZ5">
    <property type="molecule type" value="protein"/>
</dbReference>
<dbReference type="Bgee" id="ENSG00000168884">
    <property type="expression patterns" value="Expressed in tendon of biceps brachii and 201 other cell types or tissues"/>
</dbReference>
<dbReference type="ExpressionAtlas" id="Q8NFZ5">
    <property type="expression patterns" value="baseline and differential"/>
</dbReference>
<dbReference type="GO" id="GO:0005829">
    <property type="term" value="C:cytosol"/>
    <property type="evidence" value="ECO:0000314"/>
    <property type="project" value="HPA"/>
</dbReference>
<dbReference type="GO" id="GO:0005654">
    <property type="term" value="C:nucleoplasm"/>
    <property type="evidence" value="ECO:0000314"/>
    <property type="project" value="HPA"/>
</dbReference>
<dbReference type="GO" id="GO:0070530">
    <property type="term" value="F:K63-linked polyubiquitin modification-dependent protein binding"/>
    <property type="evidence" value="ECO:0007669"/>
    <property type="project" value="InterPro"/>
</dbReference>
<dbReference type="GO" id="GO:0031593">
    <property type="term" value="F:polyubiquitin modification-dependent protein binding"/>
    <property type="evidence" value="ECO:0000314"/>
    <property type="project" value="UniProtKB"/>
</dbReference>
<dbReference type="GO" id="GO:0019901">
    <property type="term" value="F:protein kinase binding"/>
    <property type="evidence" value="ECO:0000314"/>
    <property type="project" value="UniProtKB"/>
</dbReference>
<dbReference type="GO" id="GO:0008270">
    <property type="term" value="F:zinc ion binding"/>
    <property type="evidence" value="ECO:0007669"/>
    <property type="project" value="UniProtKB-KW"/>
</dbReference>
<dbReference type="GO" id="GO:0006915">
    <property type="term" value="P:apoptotic process"/>
    <property type="evidence" value="ECO:0007669"/>
    <property type="project" value="UniProtKB-KW"/>
</dbReference>
<dbReference type="GO" id="GO:0023035">
    <property type="term" value="P:CD40 signaling pathway"/>
    <property type="evidence" value="ECO:0000250"/>
    <property type="project" value="UniProtKB"/>
</dbReference>
<dbReference type="GO" id="GO:0071222">
    <property type="term" value="P:cellular response to lipopolysaccharide"/>
    <property type="evidence" value="ECO:0000250"/>
    <property type="project" value="UniProtKB"/>
</dbReference>
<dbReference type="GO" id="GO:0006954">
    <property type="term" value="P:inflammatory response"/>
    <property type="evidence" value="ECO:0007669"/>
    <property type="project" value="UniProtKB-KW"/>
</dbReference>
<dbReference type="GO" id="GO:0070498">
    <property type="term" value="P:interleukin-1-mediated signaling pathway"/>
    <property type="evidence" value="ECO:0000250"/>
    <property type="project" value="UniProtKB"/>
</dbReference>
<dbReference type="GO" id="GO:0043124">
    <property type="term" value="P:negative regulation of canonical NF-kappaB signal transduction"/>
    <property type="evidence" value="ECO:0007669"/>
    <property type="project" value="Ensembl"/>
</dbReference>
<dbReference type="GO" id="GO:2000352">
    <property type="term" value="P:negative regulation of endothelial cell apoptotic process"/>
    <property type="evidence" value="ECO:0000314"/>
    <property type="project" value="UniProtKB"/>
</dbReference>
<dbReference type="GO" id="GO:0050871">
    <property type="term" value="P:positive regulation of B cell activation"/>
    <property type="evidence" value="ECO:0000250"/>
    <property type="project" value="UniProtKB"/>
</dbReference>
<dbReference type="GO" id="GO:0043123">
    <property type="term" value="P:positive regulation of canonical NF-kappaB signal transduction"/>
    <property type="evidence" value="ECO:0000314"/>
    <property type="project" value="UniProtKB"/>
</dbReference>
<dbReference type="GO" id="GO:0043032">
    <property type="term" value="P:positive regulation of macrophage activation"/>
    <property type="evidence" value="ECO:0000250"/>
    <property type="project" value="UniProtKB"/>
</dbReference>
<dbReference type="GO" id="GO:0045944">
    <property type="term" value="P:positive regulation of transcription by RNA polymerase II"/>
    <property type="evidence" value="ECO:0000314"/>
    <property type="project" value="UniProtKB"/>
</dbReference>
<dbReference type="GO" id="GO:0050821">
    <property type="term" value="P:protein stabilization"/>
    <property type="evidence" value="ECO:0000250"/>
    <property type="project" value="UniProtKB"/>
</dbReference>
<dbReference type="GO" id="GO:0006357">
    <property type="term" value="P:regulation of transcription by RNA polymerase II"/>
    <property type="evidence" value="ECO:0000318"/>
    <property type="project" value="GO_Central"/>
</dbReference>
<dbReference type="GO" id="GO:0034134">
    <property type="term" value="P:toll-like receptor 2 signaling pathway"/>
    <property type="evidence" value="ECO:0000250"/>
    <property type="project" value="UniProtKB"/>
</dbReference>
<dbReference type="GO" id="GO:0034138">
    <property type="term" value="P:toll-like receptor 3 signaling pathway"/>
    <property type="evidence" value="ECO:0000250"/>
    <property type="project" value="UniProtKB"/>
</dbReference>
<dbReference type="GO" id="GO:0034162">
    <property type="term" value="P:toll-like receptor 9 signaling pathway"/>
    <property type="evidence" value="ECO:0000250"/>
    <property type="project" value="UniProtKB"/>
</dbReference>
<dbReference type="FunFam" id="1.20.5.990:FF:000005">
    <property type="entry name" value="TNFAIP3 interacting protein 2"/>
    <property type="match status" value="1"/>
</dbReference>
<dbReference type="Gene3D" id="1.20.5.990">
    <property type="entry name" value="Nemo cc2-lz domain - 1d5 darpin complex"/>
    <property type="match status" value="1"/>
</dbReference>
<dbReference type="InterPro" id="IPR022008">
    <property type="entry name" value="EABR"/>
</dbReference>
<dbReference type="InterPro" id="IPR034735">
    <property type="entry name" value="NEMO_ZF"/>
</dbReference>
<dbReference type="PANTHER" id="PTHR31882:SF6">
    <property type="entry name" value="TNFAIP3-INTERACTING PROTEIN 2"/>
    <property type="match status" value="1"/>
</dbReference>
<dbReference type="PANTHER" id="PTHR31882">
    <property type="entry name" value="TNFAIP3-INTERACTING PROTEIN COILED COIL FAMILY MEMBER"/>
    <property type="match status" value="1"/>
</dbReference>
<dbReference type="Pfam" id="PF12180">
    <property type="entry name" value="EABR"/>
    <property type="match status" value="1"/>
</dbReference>
<dbReference type="PROSITE" id="PS51801">
    <property type="entry name" value="ZF_CCHC_NOA"/>
    <property type="match status" value="1"/>
</dbReference>
<gene>
    <name evidence="25" type="primary">TNIP2</name>
    <name type="synonym">ABIN2</name>
    <name evidence="22" type="synonym">FLIP1</name>
</gene>
<feature type="chain" id="PRO_0000322583" description="TNFAIP3-interacting protein 2">
    <location>
        <begin position="1"/>
        <end position="429"/>
    </location>
</feature>
<feature type="zinc finger region" description="CCHC NOA-type" evidence="2">
    <location>
        <begin position="397"/>
        <end position="429"/>
    </location>
</feature>
<feature type="region of interest" description="Disordered" evidence="3">
    <location>
        <begin position="177"/>
        <end position="199"/>
    </location>
</feature>
<feature type="region of interest" description="Ubiquitin-binding domain (UBD)">
    <location>
        <begin position="289"/>
        <end position="347"/>
    </location>
</feature>
<feature type="region of interest" description="Disordered" evidence="3">
    <location>
        <begin position="372"/>
        <end position="400"/>
    </location>
</feature>
<feature type="coiled-coil region" evidence="1">
    <location>
        <begin position="29"/>
        <end position="117"/>
    </location>
</feature>
<feature type="coiled-coil region" evidence="1">
    <location>
        <begin position="196"/>
        <end position="226"/>
    </location>
</feature>
<feature type="coiled-coil region" evidence="1">
    <location>
        <begin position="255"/>
        <end position="340"/>
    </location>
</feature>
<feature type="compositionally biased region" description="Basic and acidic residues" evidence="3">
    <location>
        <begin position="177"/>
        <end position="195"/>
    </location>
</feature>
<feature type="compositionally biased region" description="Low complexity" evidence="3">
    <location>
        <begin position="388"/>
        <end position="397"/>
    </location>
</feature>
<feature type="binding site" evidence="2">
    <location>
        <position position="405"/>
    </location>
    <ligand>
        <name>Zn(2+)</name>
        <dbReference type="ChEBI" id="CHEBI:29105"/>
    </ligand>
</feature>
<feature type="binding site" evidence="2">
    <location>
        <position position="408"/>
    </location>
    <ligand>
        <name>Zn(2+)</name>
        <dbReference type="ChEBI" id="CHEBI:29105"/>
    </ligand>
</feature>
<feature type="binding site" evidence="2">
    <location>
        <position position="423"/>
    </location>
    <ligand>
        <name>Zn(2+)</name>
        <dbReference type="ChEBI" id="CHEBI:29105"/>
    </ligand>
</feature>
<feature type="binding site" evidence="2">
    <location>
        <position position="427"/>
    </location>
    <ligand>
        <name>Zn(2+)</name>
        <dbReference type="ChEBI" id="CHEBI:29105"/>
    </ligand>
</feature>
<feature type="modified residue" description="Phosphoserine" evidence="26">
    <location>
        <position position="7"/>
    </location>
</feature>
<feature type="splice variant" id="VSP_052701" description="In isoform 2." evidence="19">
    <location>
        <begin position="1"/>
        <end position="107"/>
    </location>
</feature>
<feature type="sequence variant" id="VAR_067969" description="Found in patients with gastrointestinal diffuse large cell lymphoma; impairs inhibitory activity on CARD11-induced NF-kappa-B activation; dbSNP:rs116129895." evidence="15">
    <original>Q</original>
    <variation>H</variation>
    <location>
        <position position="249"/>
    </location>
</feature>
<feature type="sequence variant" id="VAR_067970" description="Found in patients with gastrointestinal diffuse large cell lymphoma; somatic mutation; impairs inhibitory activity on CARD11-induced NF-kappa-B activation and impairs interaction with TNFAIP3; dbSNP:rs116412781." evidence="15">
    <original>E</original>
    <variation>K</variation>
    <location>
        <position position="255"/>
    </location>
</feature>
<feature type="sequence variant" id="VAR_039463" description="In dbSNP:rs2269495." evidence="11 13">
    <original>A</original>
    <variation>V</variation>
    <location>
        <position position="396"/>
    </location>
</feature>
<feature type="mutagenesis site" description="Reduces phosphorylation." evidence="16">
    <original>S</original>
    <variation>A</variation>
    <location>
        <position position="62"/>
    </location>
</feature>
<feature type="mutagenesis site" description="Reduces phosphorylation; reduces CHUK-mediated NF-kappa-B activation." evidence="16">
    <original>S</original>
    <variation>A</variation>
    <location>
        <position position="146"/>
    </location>
</feature>
<feature type="mutagenesis site" description="Abolishes ubiquitin binding." evidence="14">
    <original>DF</original>
    <variation>NA</variation>
    <location>
        <begin position="309"/>
        <end position="310"/>
    </location>
</feature>
<feature type="mutagenesis site" description="Abolishes ubiquitin binding; loss of inhibitory activity on NF-kappa-B activation." evidence="14">
    <original>ER</original>
    <variation>AA</variation>
    <location>
        <begin position="313"/>
        <end position="314"/>
    </location>
</feature>
<feature type="sequence conflict" description="In Ref. 1; CAC34835." evidence="20" ref="1">
    <original>Q</original>
    <variation>H</variation>
    <location>
        <position position="153"/>
    </location>
</feature>
<feature type="helix" evidence="27">
    <location>
        <begin position="263"/>
        <end position="273"/>
    </location>
</feature>
<feature type="helix" evidence="27">
    <location>
        <begin position="276"/>
        <end position="336"/>
    </location>
</feature>
<evidence type="ECO:0000255" key="1"/>
<evidence type="ECO:0000255" key="2">
    <source>
        <dbReference type="PROSITE-ProRule" id="PRU01142"/>
    </source>
</evidence>
<evidence type="ECO:0000256" key="3">
    <source>
        <dbReference type="SAM" id="MobiDB-lite"/>
    </source>
</evidence>
<evidence type="ECO:0000269" key="4">
    <source>
    </source>
</evidence>
<evidence type="ECO:0000269" key="5">
    <source>
    </source>
</evidence>
<evidence type="ECO:0000269" key="6">
    <source>
    </source>
</evidence>
<evidence type="ECO:0000269" key="7">
    <source>
    </source>
</evidence>
<evidence type="ECO:0000269" key="8">
    <source>
    </source>
</evidence>
<evidence type="ECO:0000269" key="9">
    <source>
    </source>
</evidence>
<evidence type="ECO:0000269" key="10">
    <source>
    </source>
</evidence>
<evidence type="ECO:0000269" key="11">
    <source>
    </source>
</evidence>
<evidence type="ECO:0000269" key="12">
    <source>
    </source>
</evidence>
<evidence type="ECO:0000269" key="13">
    <source>
    </source>
</evidence>
<evidence type="ECO:0000269" key="14">
    <source>
    </source>
</evidence>
<evidence type="ECO:0000269" key="15">
    <source>
    </source>
</evidence>
<evidence type="ECO:0000269" key="16">
    <source>
    </source>
</evidence>
<evidence type="ECO:0000269" key="17">
    <source>
    </source>
</evidence>
<evidence type="ECO:0000269" key="18">
    <source>
    </source>
</evidence>
<evidence type="ECO:0000303" key="19">
    <source>
    </source>
</evidence>
<evidence type="ECO:0000305" key="20"/>
<evidence type="ECO:0000312" key="21">
    <source>
        <dbReference type="EMBL" id="AAH02740.2"/>
    </source>
</evidence>
<evidence type="ECO:0000312" key="22">
    <source>
        <dbReference type="EMBL" id="AAM21315.1"/>
    </source>
</evidence>
<evidence type="ECO:0000312" key="23">
    <source>
        <dbReference type="EMBL" id="BAB15382.1"/>
    </source>
</evidence>
<evidence type="ECO:0000312" key="24">
    <source>
        <dbReference type="EMBL" id="CAC34835.1"/>
    </source>
</evidence>
<evidence type="ECO:0000312" key="25">
    <source>
        <dbReference type="EMBL" id="EAW82514.1"/>
    </source>
</evidence>
<evidence type="ECO:0007744" key="26">
    <source>
    </source>
</evidence>
<evidence type="ECO:0007829" key="27">
    <source>
        <dbReference type="PDB" id="5H07"/>
    </source>
</evidence>
<proteinExistence type="evidence at protein level"/>
<protein>
    <recommendedName>
        <fullName>TNFAIP3-interacting protein 2</fullName>
    </recommendedName>
    <alternativeName>
        <fullName>A20-binding inhibitor of NF-kappa-B activation 2</fullName>
        <shortName>ABIN-2</shortName>
    </alternativeName>
    <alternativeName>
        <fullName>Fetal liver LKB1-interacting protein</fullName>
    </alternativeName>
</protein>
<organism>
    <name type="scientific">Homo sapiens</name>
    <name type="common">Human</name>
    <dbReference type="NCBI Taxonomy" id="9606"/>
    <lineage>
        <taxon>Eukaryota</taxon>
        <taxon>Metazoa</taxon>
        <taxon>Chordata</taxon>
        <taxon>Craniata</taxon>
        <taxon>Vertebrata</taxon>
        <taxon>Euteleostomi</taxon>
        <taxon>Mammalia</taxon>
        <taxon>Eutheria</taxon>
        <taxon>Euarchontoglires</taxon>
        <taxon>Primates</taxon>
        <taxon>Haplorrhini</taxon>
        <taxon>Catarrhini</taxon>
        <taxon>Hominidae</taxon>
        <taxon>Homo</taxon>
    </lineage>
</organism>
<sequence length="429" mass="48700">MSRDPGSGGWEEAPRAAAALCTLYHEAGQRLRRLQDQLAARDALIARLRARLAALEGDAAPSLVDALLEQVARFREQLRRQEGGAAEAQMRQEIERLTERLEEKEREMQQLLSQPQHEREKEVVLLRRSMAEGERARAASDVLCRSLANETHQLRRTLTATAHMCQHLAKCLDERQHAQRNVGERSPDQSEHTDGHTSVQSVIEKLQEENRLLKQKVTHVEDLNAKWQRYNASRDEYVRGLHAQLRGLQIPHEPELMRKEISRLNRQLEEKINDCAEVKQELAASRTARDAALERVQMLEQQILAYKDDFMSERADRERAQSRIQELEEKVASLLHQVSWRQDSREPDAGRIHAGSKTAKYLAADALELMVPGGWRPGTGSQQPEPPAEGGHPGAAQRGQGDLQCPHCLQCFSDEQGEELLRHVAECCQ</sequence>
<keyword id="KW-0002">3D-structure</keyword>
<keyword id="KW-0025">Alternative splicing</keyword>
<keyword id="KW-0053">Apoptosis</keyword>
<keyword id="KW-0175">Coiled coil</keyword>
<keyword id="KW-0963">Cytoplasm</keyword>
<keyword id="KW-0945">Host-virus interaction</keyword>
<keyword id="KW-0395">Inflammatory response</keyword>
<keyword id="KW-0479">Metal-binding</keyword>
<keyword id="KW-0539">Nucleus</keyword>
<keyword id="KW-0597">Phosphoprotein</keyword>
<keyword id="KW-1267">Proteomics identification</keyword>
<keyword id="KW-1185">Reference proteome</keyword>
<keyword id="KW-0804">Transcription</keyword>
<keyword id="KW-0805">Transcription regulation</keyword>
<keyword id="KW-0832">Ubl conjugation</keyword>
<keyword id="KW-0862">Zinc</keyword>
<keyword id="KW-0863">Zinc-finger</keyword>
<accession>Q8NFZ5</accession>
<accession>B1AKS4</accession>
<accession>B3KTY8</accession>
<accession>D3DVQ9</accession>
<accession>Q7L5L2</accession>
<accession>Q9BQR6</accession>
<accession>Q9H682</accession>
<name>TNIP2_HUMAN</name>
<reference evidence="20 24" key="1">
    <citation type="journal article" date="2001" name="J. Biol. Chem.">
        <title>Identification of a novel A20-binding inhibitor of nuclear factor-kappaB activation termed ABIN-2.</title>
        <authorList>
            <person name="Van Huffel S.C."/>
            <person name="Delaei F."/>
            <person name="Heyninck K."/>
            <person name="De Valck D."/>
            <person name="Beyaert R."/>
        </authorList>
    </citation>
    <scope>NUCLEOTIDE SEQUENCE [MRNA] (ISOFORM 1)</scope>
</reference>
<reference evidence="20 22" key="2">
    <citation type="journal article" date="2003" name="J. Biomed. Sci.">
        <title>An LKB1-interacting protein negatively regulates TNFalpha-induced NF-kappaB activation.</title>
        <authorList>
            <person name="Liu W.-K."/>
            <person name="Chien C.-Y."/>
            <person name="Chou C.-K."/>
            <person name="Su J.-Y."/>
        </authorList>
    </citation>
    <scope>NUCLEOTIDE SEQUENCE [MRNA] (ISOFORM 1)</scope>
    <scope>FUNCTION</scope>
    <scope>SUBCELLULAR LOCATION</scope>
    <scope>TISSUE SPECIFICITY</scope>
    <scope>INTERACTION WITH STK11/LKB1</scope>
</reference>
<reference evidence="20 23" key="3">
    <citation type="journal article" date="2004" name="Nat. Genet.">
        <title>Complete sequencing and characterization of 21,243 full-length human cDNAs.</title>
        <authorList>
            <person name="Ota T."/>
            <person name="Suzuki Y."/>
            <person name="Nishikawa T."/>
            <person name="Otsuki T."/>
            <person name="Sugiyama T."/>
            <person name="Irie R."/>
            <person name="Wakamatsu A."/>
            <person name="Hayashi K."/>
            <person name="Sato H."/>
            <person name="Nagai K."/>
            <person name="Kimura K."/>
            <person name="Makita H."/>
            <person name="Sekine M."/>
            <person name="Obayashi M."/>
            <person name="Nishi T."/>
            <person name="Shibahara T."/>
            <person name="Tanaka T."/>
            <person name="Ishii S."/>
            <person name="Yamamoto J."/>
            <person name="Saito K."/>
            <person name="Kawai Y."/>
            <person name="Isono Y."/>
            <person name="Nakamura Y."/>
            <person name="Nagahari K."/>
            <person name="Murakami K."/>
            <person name="Yasuda T."/>
            <person name="Iwayanagi T."/>
            <person name="Wagatsuma M."/>
            <person name="Shiratori A."/>
            <person name="Sudo H."/>
            <person name="Hosoiri T."/>
            <person name="Kaku Y."/>
            <person name="Kodaira H."/>
            <person name="Kondo H."/>
            <person name="Sugawara M."/>
            <person name="Takahashi M."/>
            <person name="Kanda K."/>
            <person name="Yokoi T."/>
            <person name="Furuya T."/>
            <person name="Kikkawa E."/>
            <person name="Omura Y."/>
            <person name="Abe K."/>
            <person name="Kamihara K."/>
            <person name="Katsuta N."/>
            <person name="Sato K."/>
            <person name="Tanikawa M."/>
            <person name="Yamazaki M."/>
            <person name="Ninomiya K."/>
            <person name="Ishibashi T."/>
            <person name="Yamashita H."/>
            <person name="Murakawa K."/>
            <person name="Fujimori K."/>
            <person name="Tanai H."/>
            <person name="Kimata M."/>
            <person name="Watanabe M."/>
            <person name="Hiraoka S."/>
            <person name="Chiba Y."/>
            <person name="Ishida S."/>
            <person name="Ono Y."/>
            <person name="Takiguchi S."/>
            <person name="Watanabe S."/>
            <person name="Yosida M."/>
            <person name="Hotuta T."/>
            <person name="Kusano J."/>
            <person name="Kanehori K."/>
            <person name="Takahashi-Fujii A."/>
            <person name="Hara H."/>
            <person name="Tanase T.-O."/>
            <person name="Nomura Y."/>
            <person name="Togiya S."/>
            <person name="Komai F."/>
            <person name="Hara R."/>
            <person name="Takeuchi K."/>
            <person name="Arita M."/>
            <person name="Imose N."/>
            <person name="Musashino K."/>
            <person name="Yuuki H."/>
            <person name="Oshima A."/>
            <person name="Sasaki N."/>
            <person name="Aotsuka S."/>
            <person name="Yoshikawa Y."/>
            <person name="Matsunawa H."/>
            <person name="Ichihara T."/>
            <person name="Shiohata N."/>
            <person name="Sano S."/>
            <person name="Moriya S."/>
            <person name="Momiyama H."/>
            <person name="Satoh N."/>
            <person name="Takami S."/>
            <person name="Terashima Y."/>
            <person name="Suzuki O."/>
            <person name="Nakagawa S."/>
            <person name="Senoh A."/>
            <person name="Mizoguchi H."/>
            <person name="Goto Y."/>
            <person name="Shimizu F."/>
            <person name="Wakebe H."/>
            <person name="Hishigaki H."/>
            <person name="Watanabe T."/>
            <person name="Sugiyama A."/>
            <person name="Takemoto M."/>
            <person name="Kawakami B."/>
            <person name="Yamazaki M."/>
            <person name="Watanabe K."/>
            <person name="Kumagai A."/>
            <person name="Itakura S."/>
            <person name="Fukuzumi Y."/>
            <person name="Fujimori Y."/>
            <person name="Komiyama M."/>
            <person name="Tashiro H."/>
            <person name="Tanigami A."/>
            <person name="Fujiwara T."/>
            <person name="Ono T."/>
            <person name="Yamada K."/>
            <person name="Fujii Y."/>
            <person name="Ozaki K."/>
            <person name="Hirao M."/>
            <person name="Ohmori Y."/>
            <person name="Kawabata A."/>
            <person name="Hikiji T."/>
            <person name="Kobatake N."/>
            <person name="Inagaki H."/>
            <person name="Ikema Y."/>
            <person name="Okamoto S."/>
            <person name="Okitani R."/>
            <person name="Kawakami T."/>
            <person name="Noguchi S."/>
            <person name="Itoh T."/>
            <person name="Shigeta K."/>
            <person name="Senba T."/>
            <person name="Matsumura K."/>
            <person name="Nakajima Y."/>
            <person name="Mizuno T."/>
            <person name="Morinaga M."/>
            <person name="Sasaki M."/>
            <person name="Togashi T."/>
            <person name="Oyama M."/>
            <person name="Hata H."/>
            <person name="Watanabe M."/>
            <person name="Komatsu T."/>
            <person name="Mizushima-Sugano J."/>
            <person name="Satoh T."/>
            <person name="Shirai Y."/>
            <person name="Takahashi Y."/>
            <person name="Nakagawa K."/>
            <person name="Okumura K."/>
            <person name="Nagase T."/>
            <person name="Nomura N."/>
            <person name="Kikuchi H."/>
            <person name="Masuho Y."/>
            <person name="Yamashita R."/>
            <person name="Nakai K."/>
            <person name="Yada T."/>
            <person name="Nakamura Y."/>
            <person name="Ohara O."/>
            <person name="Isogai T."/>
            <person name="Sugano S."/>
        </authorList>
    </citation>
    <scope>NUCLEOTIDE SEQUENCE [LARGE SCALE MRNA] (ISOFORMS 1 AND 2)</scope>
    <scope>VARIANT VAL-396</scope>
    <source>
        <tissue evidence="23">Kidney epithelium</tissue>
    </source>
</reference>
<reference evidence="20 25" key="4">
    <citation type="submission" date="2005-09" db="EMBL/GenBank/DDBJ databases">
        <authorList>
            <person name="Mural R.J."/>
            <person name="Istrail S."/>
            <person name="Sutton G.G."/>
            <person name="Florea L."/>
            <person name="Halpern A.L."/>
            <person name="Mobarry C.M."/>
            <person name="Lippert R."/>
            <person name="Walenz B."/>
            <person name="Shatkay H."/>
            <person name="Dew I."/>
            <person name="Miller J.R."/>
            <person name="Flanigan M.J."/>
            <person name="Edwards N.J."/>
            <person name="Bolanos R."/>
            <person name="Fasulo D."/>
            <person name="Halldorsson B.V."/>
            <person name="Hannenhalli S."/>
            <person name="Turner R."/>
            <person name="Yooseph S."/>
            <person name="Lu F."/>
            <person name="Nusskern D.R."/>
            <person name="Shue B.C."/>
            <person name="Zheng X.H."/>
            <person name="Zhong F."/>
            <person name="Delcher A.L."/>
            <person name="Huson D.H."/>
            <person name="Kravitz S.A."/>
            <person name="Mouchard L."/>
            <person name="Reinert K."/>
            <person name="Remington K.A."/>
            <person name="Clark A.G."/>
            <person name="Waterman M.S."/>
            <person name="Eichler E.E."/>
            <person name="Adams M.D."/>
            <person name="Hunkapiller M.W."/>
            <person name="Myers E.W."/>
            <person name="Venter J.C."/>
        </authorList>
    </citation>
    <scope>NUCLEOTIDE SEQUENCE [LARGE SCALE GENOMIC DNA]</scope>
</reference>
<reference key="5">
    <citation type="journal article" date="2005" name="Nature">
        <title>Generation and annotation of the DNA sequences of human chromosomes 2 and 4.</title>
        <authorList>
            <person name="Hillier L.W."/>
            <person name="Graves T.A."/>
            <person name="Fulton R.S."/>
            <person name="Fulton L.A."/>
            <person name="Pepin K.H."/>
            <person name="Minx P."/>
            <person name="Wagner-McPherson C."/>
            <person name="Layman D."/>
            <person name="Wylie K."/>
            <person name="Sekhon M."/>
            <person name="Becker M.C."/>
            <person name="Fewell G.A."/>
            <person name="Delehaunty K.D."/>
            <person name="Miner T.L."/>
            <person name="Nash W.E."/>
            <person name="Kremitzki C."/>
            <person name="Oddy L."/>
            <person name="Du H."/>
            <person name="Sun H."/>
            <person name="Bradshaw-Cordum H."/>
            <person name="Ali J."/>
            <person name="Carter J."/>
            <person name="Cordes M."/>
            <person name="Harris A."/>
            <person name="Isak A."/>
            <person name="van Brunt A."/>
            <person name="Nguyen C."/>
            <person name="Du F."/>
            <person name="Courtney L."/>
            <person name="Kalicki J."/>
            <person name="Ozersky P."/>
            <person name="Abbott S."/>
            <person name="Armstrong J."/>
            <person name="Belter E.A."/>
            <person name="Caruso L."/>
            <person name="Cedroni M."/>
            <person name="Cotton M."/>
            <person name="Davidson T."/>
            <person name="Desai A."/>
            <person name="Elliott G."/>
            <person name="Erb T."/>
            <person name="Fronick C."/>
            <person name="Gaige T."/>
            <person name="Haakenson W."/>
            <person name="Haglund K."/>
            <person name="Holmes A."/>
            <person name="Harkins R."/>
            <person name="Kim K."/>
            <person name="Kruchowski S.S."/>
            <person name="Strong C.M."/>
            <person name="Grewal N."/>
            <person name="Goyea E."/>
            <person name="Hou S."/>
            <person name="Levy A."/>
            <person name="Martinka S."/>
            <person name="Mead K."/>
            <person name="McLellan M.D."/>
            <person name="Meyer R."/>
            <person name="Randall-Maher J."/>
            <person name="Tomlinson C."/>
            <person name="Dauphin-Kohlberg S."/>
            <person name="Kozlowicz-Reilly A."/>
            <person name="Shah N."/>
            <person name="Swearengen-Shahid S."/>
            <person name="Snider J."/>
            <person name="Strong J.T."/>
            <person name="Thompson J."/>
            <person name="Yoakum M."/>
            <person name="Leonard S."/>
            <person name="Pearman C."/>
            <person name="Trani L."/>
            <person name="Radionenko M."/>
            <person name="Waligorski J.E."/>
            <person name="Wang C."/>
            <person name="Rock S.M."/>
            <person name="Tin-Wollam A.-M."/>
            <person name="Maupin R."/>
            <person name="Latreille P."/>
            <person name="Wendl M.C."/>
            <person name="Yang S.-P."/>
            <person name="Pohl C."/>
            <person name="Wallis J.W."/>
            <person name="Spieth J."/>
            <person name="Bieri T.A."/>
            <person name="Berkowicz N."/>
            <person name="Nelson J.O."/>
            <person name="Osborne J."/>
            <person name="Ding L."/>
            <person name="Meyer R."/>
            <person name="Sabo A."/>
            <person name="Shotland Y."/>
            <person name="Sinha P."/>
            <person name="Wohldmann P.E."/>
            <person name="Cook L.L."/>
            <person name="Hickenbotham M.T."/>
            <person name="Eldred J."/>
            <person name="Williams D."/>
            <person name="Jones T.A."/>
            <person name="She X."/>
            <person name="Ciccarelli F.D."/>
            <person name="Izaurralde E."/>
            <person name="Taylor J."/>
            <person name="Schmutz J."/>
            <person name="Myers R.M."/>
            <person name="Cox D.R."/>
            <person name="Huang X."/>
            <person name="McPherson J.D."/>
            <person name="Mardis E.R."/>
            <person name="Clifton S.W."/>
            <person name="Warren W.C."/>
            <person name="Chinwalla A.T."/>
            <person name="Eddy S.R."/>
            <person name="Marra M.A."/>
            <person name="Ovcharenko I."/>
            <person name="Furey T.S."/>
            <person name="Miller W."/>
            <person name="Eichler E.E."/>
            <person name="Bork P."/>
            <person name="Suyama M."/>
            <person name="Torrents D."/>
            <person name="Waterston R.H."/>
            <person name="Wilson R.K."/>
        </authorList>
    </citation>
    <scope>NUCLEOTIDE SEQUENCE [LARGE SCALE GENOMIC DNA]</scope>
</reference>
<reference evidence="20 21" key="6">
    <citation type="journal article" date="2004" name="Genome Res.">
        <title>The status, quality, and expansion of the NIH full-length cDNA project: the Mammalian Gene Collection (MGC).</title>
        <authorList>
            <consortium name="The MGC Project Team"/>
        </authorList>
    </citation>
    <scope>NUCLEOTIDE SEQUENCE [LARGE SCALE MRNA] (ISOFORM 1)</scope>
    <scope>VARIANT VAL-396</scope>
    <source>
        <tissue evidence="21">Uterus</tissue>
    </source>
</reference>
<reference key="7">
    <citation type="journal article" date="2001" name="FEBS Lett.">
        <title>Functional redundancy of the zinc fingers of A20 for inhibition of NF-kappaB activation and protein-protein interactions.</title>
        <authorList>
            <person name="Klinkenberg M."/>
            <person name="Van Huffel S."/>
            <person name="Heyninck K."/>
            <person name="Beyaert R."/>
        </authorList>
    </citation>
    <scope>INTERACTION WITH TNFAIP3</scope>
</reference>
<reference key="8">
    <citation type="journal article" date="2003" name="Blood">
        <title>ABIN-2 protects endothelial cells from death and has a role in the antiapoptotic effect of angiopoietin-1.</title>
        <authorList>
            <person name="Tadros A."/>
            <person name="Hughes D.P."/>
            <person name="Dunmore B.J."/>
            <person name="Brindle N.P."/>
        </authorList>
    </citation>
    <scope>FUNCTION</scope>
</reference>
<reference key="9">
    <citation type="journal article" date="2003" name="Circ. Res.">
        <title>The antiinflammatory endothelial tyrosine kinase Tie2 interacts with a novel nuclear factor-kappaB inhibitor ABIN-2.</title>
        <authorList>
            <person name="Hughes D.P."/>
            <person name="Marron M.B."/>
            <person name="Brindle N.P."/>
        </authorList>
    </citation>
    <scope>INTERACTION WITH TEK</scope>
</reference>
<reference key="10">
    <citation type="journal article" date="2003" name="FEBS Lett.">
        <title>The A20-binding protein ABIN-2 exerts unexpected function in mediating transcriptional coactivation.</title>
        <authorList>
            <person name="Chien C.Y."/>
            <person name="Liu W.K."/>
            <person name="Chou C.K."/>
            <person name="Su J.Y."/>
        </authorList>
    </citation>
    <scope>FUNCTION</scope>
    <scope>SUBCELLULAR LOCATION</scope>
    <scope>INTERACTION WITH SMARCD1</scope>
</reference>
<reference evidence="20" key="11">
    <citation type="journal article" date="2004" name="Biochem. J.">
        <title>The inhibitor ABIN-2 disrupts the interaction of receptor-interacting protein with the kinase subunit IKKgamma to block activation of the transcription factor NF-kappaB and potentiate apoptosis.</title>
        <authorList>
            <person name="Liu W.-K."/>
            <person name="Yen P.-F."/>
            <person name="Chien C.-Y."/>
            <person name="Fann M.-J."/>
            <person name="Su J.-Y."/>
            <person name="Chou C.-K."/>
        </authorList>
    </citation>
    <scope>FUNCTION</scope>
    <scope>INTERACTION WITH IKBKG</scope>
</reference>
<reference evidence="20" key="12">
    <citation type="journal article" date="2004" name="Mol. Cell. Biol.">
        <title>ABIN-2 forms a ternary complex with TPL-2 and NF-kappa B1 p105 and is essential for TPL-2 protein stability.</title>
        <authorList>
            <person name="Lang V."/>
            <person name="Symons A."/>
            <person name="Watton S.J."/>
            <person name="Janzen J."/>
            <person name="Soneji Y."/>
            <person name="Beinke S."/>
            <person name="Howell S."/>
            <person name="Ley S.C."/>
        </authorList>
    </citation>
    <scope>FUNCTION</scope>
    <scope>INTERACTION WITH NFKB1; MAP3K8 AND TNFAIP3</scope>
</reference>
<reference key="13">
    <citation type="journal article" date="2008" name="Oncogene">
        <title>Ubiquitin binding mediates the NF-kappaB inhibitory potential of ABIN proteins.</title>
        <authorList>
            <person name="Wagner S."/>
            <person name="Carpentier I."/>
            <person name="Rogov V."/>
            <person name="Kreike M."/>
            <person name="Ikeda F."/>
            <person name="Lohr F."/>
            <person name="Wu C.J."/>
            <person name="Ashwell J.D."/>
            <person name="Dotsch V."/>
            <person name="Dikic I."/>
            <person name="Beyaert R."/>
        </authorList>
    </citation>
    <scope>UBIQUITIN-BINDING</scope>
    <scope>MUTAGENESIS OF 309-ASP-PHE-310 AND 313-GLU-ARG-314</scope>
</reference>
<reference key="14">
    <citation type="journal article" date="2011" name="J. Biol. Chem.">
        <title>A20-binding inhibitor of nuclear factor-kappaB (NF-kappaB)-2 (ABIN-2) is an activator of inhibitor of NF-kappaB (IkappaB) kinase alpha (IKKalpha)-mediated NF-kappaB transcriptional activity.</title>
        <authorList>
            <person name="Leotoing L."/>
            <person name="Chereau F."/>
            <person name="Baron S."/>
            <person name="Hube F."/>
            <person name="Valencia H.J."/>
            <person name="Bordereaux D."/>
            <person name="Demmers J.A."/>
            <person name="Strouboulis J."/>
            <person name="Baud V."/>
        </authorList>
    </citation>
    <scope>FUNCTION</scope>
    <scope>SUBCELLULAR LOCATION</scope>
    <scope>INTERACTION WITH CHUK AND IKBKB</scope>
    <scope>UBIQUITINATION</scope>
    <scope>PHOSPHORYLATION</scope>
    <scope>MUTAGENESIS OF SER-62 AND SER-146</scope>
</reference>
<reference key="15">
    <citation type="journal article" date="2013" name="J. Proteome Res.">
        <title>Toward a comprehensive characterization of a human cancer cell phosphoproteome.</title>
        <authorList>
            <person name="Zhou H."/>
            <person name="Di Palma S."/>
            <person name="Preisinger C."/>
            <person name="Peng M."/>
            <person name="Polat A.N."/>
            <person name="Heck A.J."/>
            <person name="Mohammed S."/>
        </authorList>
    </citation>
    <scope>IDENTIFICATION BY MASS SPECTROMETRY [LARGE SCALE ANALYSIS]</scope>
    <source>
        <tissue>Cervix carcinoma</tissue>
        <tissue>Erythroleukemia</tissue>
    </source>
</reference>
<reference key="16">
    <citation type="journal article" date="2014" name="J. Proteomics">
        <title>An enzyme assisted RP-RPLC approach for in-depth analysis of human liver phosphoproteome.</title>
        <authorList>
            <person name="Bian Y."/>
            <person name="Song C."/>
            <person name="Cheng K."/>
            <person name="Dong M."/>
            <person name="Wang F."/>
            <person name="Huang J."/>
            <person name="Sun D."/>
            <person name="Wang L."/>
            <person name="Ye M."/>
            <person name="Zou H."/>
        </authorList>
    </citation>
    <scope>PHOSPHORYLATION [LARGE SCALE ANALYSIS] AT SER-7</scope>
    <scope>IDENTIFICATION BY MASS SPECTROMETRY [LARGE SCALE ANALYSIS]</scope>
    <source>
        <tissue>Liver</tissue>
    </source>
</reference>
<reference key="17">
    <citation type="journal article" date="2015" name="Oncotarget">
        <title>USP35 activated by miR let-7a inhibits cell proliferation and NF-kappaB activation through stabilization of ABIN-2.</title>
        <authorList>
            <person name="Liu C."/>
            <person name="Wang L."/>
            <person name="Chen W."/>
            <person name="Zhao S."/>
            <person name="Yin C."/>
            <person name="Lin Y."/>
            <person name="Jiang A."/>
            <person name="Zhang P."/>
        </authorList>
    </citation>
    <scope>FUNCTION</scope>
    <scope>DEUBIQUITINATION BY USP35</scope>
</reference>
<reference key="18">
    <citation type="journal article" date="2019" name="Nat. Microbiol.">
        <title>Severe fever with thrombocytopenia syndrome phlebovirus non-structural protein activates TPL2 signalling pathway for viral immunopathogenesis.</title>
        <authorList>
            <person name="Choi Y."/>
            <person name="Park S.J."/>
            <person name="Sun Y."/>
            <person name="Yoo J.S."/>
            <person name="Pudupakam R.S."/>
            <person name="Foo S.S."/>
            <person name="Shin W.J."/>
            <person name="Chen S.B."/>
            <person name="Tsichlis P.N."/>
            <person name="Lee W.J."/>
            <person name="Lee J.S."/>
            <person name="Li W."/>
            <person name="Brennan B."/>
            <person name="Choi Y.K."/>
            <person name="Jung J.U."/>
        </authorList>
    </citation>
    <scope>INTERACTION WITH SFTSV VIRUS NSS (MICROBIAL INFECTION)</scope>
</reference>
<reference key="19">
    <citation type="journal article" date="2011" name="Clin. Cancer Res.">
        <title>A20, ABIN-1/2, and CARD11 mutations and their prognostic value in gastrointestinal diffuse large B-cell lymphoma.</title>
        <authorList>
            <person name="Dong G."/>
            <person name="Chanudet E."/>
            <person name="Zeng N."/>
            <person name="Appert A."/>
            <person name="Chen Y.W."/>
            <person name="Au W.Y."/>
            <person name="Hamoudi R.A."/>
            <person name="Watkins A.J."/>
            <person name="Ye H."/>
            <person name="Liu H."/>
            <person name="Gao Z."/>
            <person name="Chuang S.S."/>
            <person name="Srivastava G."/>
            <person name="Du M.Q."/>
        </authorList>
    </citation>
    <scope>VARIANTS HIS-249 AND LYS-255</scope>
    <scope>INTERACTION WITH TNFAIP3</scope>
    <scope>CHARACTERIZATION OF VARIANT LYS-255</scope>
</reference>